<protein>
    <recommendedName>
        <fullName>Transcript termination protein A18</fullName>
        <ecNumber>3.6.4.-</ecNumber>
    </recommendedName>
</protein>
<proteinExistence type="inferred from homology"/>
<dbReference type="EC" id="3.6.4.-"/>
<dbReference type="EMBL" id="AJ293568">
    <property type="protein sequence ID" value="CAC21348.1"/>
    <property type="molecule type" value="Genomic_DNA"/>
</dbReference>
<dbReference type="RefSeq" id="NP_073495.1">
    <property type="nucleotide sequence ID" value="NC_002642.1"/>
</dbReference>
<dbReference type="GeneID" id="918615"/>
<dbReference type="KEGG" id="vg:918615"/>
<dbReference type="OrthoDB" id="4131at10239"/>
<dbReference type="Proteomes" id="UP000136581">
    <property type="component" value="Genome"/>
</dbReference>
<dbReference type="GO" id="GO:0097550">
    <property type="term" value="C:transcription preinitiation complex"/>
    <property type="evidence" value="ECO:0007669"/>
    <property type="project" value="TreeGrafter"/>
</dbReference>
<dbReference type="GO" id="GO:0044423">
    <property type="term" value="C:virion component"/>
    <property type="evidence" value="ECO:0007669"/>
    <property type="project" value="UniProtKB-KW"/>
</dbReference>
<dbReference type="GO" id="GO:0043138">
    <property type="term" value="F:3'-5' DNA helicase activity"/>
    <property type="evidence" value="ECO:0007669"/>
    <property type="project" value="TreeGrafter"/>
</dbReference>
<dbReference type="GO" id="GO:0005524">
    <property type="term" value="F:ATP binding"/>
    <property type="evidence" value="ECO:0007669"/>
    <property type="project" value="UniProtKB-KW"/>
</dbReference>
<dbReference type="GO" id="GO:0003677">
    <property type="term" value="F:DNA binding"/>
    <property type="evidence" value="ECO:0007669"/>
    <property type="project" value="UniProtKB-KW"/>
</dbReference>
<dbReference type="GO" id="GO:0016787">
    <property type="term" value="F:hydrolase activity"/>
    <property type="evidence" value="ECO:0007669"/>
    <property type="project" value="UniProtKB-KW"/>
</dbReference>
<dbReference type="GO" id="GO:0006367">
    <property type="term" value="P:transcription initiation at RNA polymerase II promoter"/>
    <property type="evidence" value="ECO:0007669"/>
    <property type="project" value="TreeGrafter"/>
</dbReference>
<dbReference type="CDD" id="cd18785">
    <property type="entry name" value="SF2_C"/>
    <property type="match status" value="1"/>
</dbReference>
<dbReference type="Gene3D" id="3.40.50.300">
    <property type="entry name" value="P-loop containing nucleotide triphosphate hydrolases"/>
    <property type="match status" value="2"/>
</dbReference>
<dbReference type="InterPro" id="IPR050615">
    <property type="entry name" value="ATP-dep_DNA_Helicase"/>
</dbReference>
<dbReference type="InterPro" id="IPR006935">
    <property type="entry name" value="Helicase/UvrB_N"/>
</dbReference>
<dbReference type="InterPro" id="IPR014001">
    <property type="entry name" value="Helicase_ATP-bd"/>
</dbReference>
<dbReference type="InterPro" id="IPR001650">
    <property type="entry name" value="Helicase_C-like"/>
</dbReference>
<dbReference type="InterPro" id="IPR027417">
    <property type="entry name" value="P-loop_NTPase"/>
</dbReference>
<dbReference type="PANTHER" id="PTHR11274:SF13">
    <property type="entry name" value="HELICASE A859L-RELATED"/>
    <property type="match status" value="1"/>
</dbReference>
<dbReference type="PANTHER" id="PTHR11274">
    <property type="entry name" value="RAD25/XP-B DNA REPAIR HELICASE"/>
    <property type="match status" value="1"/>
</dbReference>
<dbReference type="Pfam" id="PF00271">
    <property type="entry name" value="Helicase_C"/>
    <property type="match status" value="1"/>
</dbReference>
<dbReference type="Pfam" id="PF04851">
    <property type="entry name" value="ResIII"/>
    <property type="match status" value="1"/>
</dbReference>
<dbReference type="SMART" id="SM00487">
    <property type="entry name" value="DEXDc"/>
    <property type="match status" value="1"/>
</dbReference>
<dbReference type="SUPFAM" id="SSF52540">
    <property type="entry name" value="P-loop containing nucleoside triphosphate hydrolases"/>
    <property type="match status" value="1"/>
</dbReference>
<dbReference type="PROSITE" id="PS51192">
    <property type="entry name" value="HELICASE_ATP_BIND_1"/>
    <property type="match status" value="1"/>
</dbReference>
<dbReference type="PROSITE" id="PS51194">
    <property type="entry name" value="HELICASE_CTER"/>
    <property type="match status" value="1"/>
</dbReference>
<name>A18_YLDV</name>
<comment type="function">
    <text evidence="1">DNA helicase which seems to act as a postreplicative transcription termination factor. Involved in ATP-dependent release of nascent RNA. Forms a stable complex with single-stranded DNA, and to a lesser extent RNA (By similarity).</text>
</comment>
<comment type="subunit">
    <text evidence="1">Interacts with G2. Might be part of a transcription complex composed at least of G2, A18, and H5.</text>
</comment>
<comment type="subcellular location">
    <subcellularLocation>
        <location evidence="1">Virion</location>
    </subcellularLocation>
    <text evidence="1">Localizes to the virion core.</text>
</comment>
<comment type="similarity">
    <text evidence="4">Belongs to the helicase family. Poxviruses subfamily.</text>
</comment>
<accession>Q9DHK3</accession>
<sequence length="479" mass="55647">MSVCTEIDYKLYTELKKIAGNSLFLFNENGDFTEVVLNSSFKFLVPIGFFSSIDIPLKKPIEYKNNNNNIEHSKNIILPNLYPFQKHVVSEVLLSMEKKNKHKRPTYITLHLACGFGKTITSCYLLSLHKKKAVICLPNKMLINQWKRAIESINMDHIVSVDGVSNLLKEMVKKTADILIIVSRHLLNEEFCKKIYLNYDIFILDESHMYNLMNNSAVTKFLTYYPPKVCYFLTATPRKVNRIYCNDIINVSNSLELKKYIKIVEFFFETYSSDTIKQMVKKLNTNYNKYHMYTEKILAEDVPRNELILDTIIYDFNKMLINRLIIVTKLRKHMMFFYDRLSEKFGLDVVYLGDAKNKNISDIVKKIKSIDRFIFISTTNYSGTGLDVPTLDSLVICSAVMNSMQIEQILGRICRSSVSKTRTVIVFPNTSIKEIKHMVGFFTQKIITLAIEKLNFKKIEKKGKKKELALCKAFNLQTH</sequence>
<keyword id="KW-0067">ATP-binding</keyword>
<keyword id="KW-0238">DNA-binding</keyword>
<keyword id="KW-0347">Helicase</keyword>
<keyword id="KW-0378">Hydrolase</keyword>
<keyword id="KW-0426">Late protein</keyword>
<keyword id="KW-0547">Nucleotide-binding</keyword>
<keyword id="KW-0804">Transcription</keyword>
<keyword id="KW-0946">Virion</keyword>
<feature type="chain" id="PRO_0000102189" description="Transcript termination protein A18">
    <location>
        <begin position="1"/>
        <end position="479"/>
    </location>
</feature>
<feature type="domain" description="Helicase ATP-binding" evidence="2">
    <location>
        <begin position="99"/>
        <end position="255"/>
    </location>
</feature>
<feature type="domain" description="Helicase C-terminal" evidence="3">
    <location>
        <begin position="308"/>
        <end position="469"/>
    </location>
</feature>
<feature type="short sequence motif" description="DESH box">
    <location>
        <begin position="205"/>
        <end position="208"/>
    </location>
</feature>
<feature type="binding site" evidence="2">
    <location>
        <begin position="112"/>
        <end position="119"/>
    </location>
    <ligand>
        <name>ATP</name>
        <dbReference type="ChEBI" id="CHEBI:30616"/>
    </ligand>
</feature>
<evidence type="ECO:0000250" key="1"/>
<evidence type="ECO:0000255" key="2">
    <source>
        <dbReference type="PROSITE-ProRule" id="PRU00541"/>
    </source>
</evidence>
<evidence type="ECO:0000255" key="3">
    <source>
        <dbReference type="PROSITE-ProRule" id="PRU00542"/>
    </source>
</evidence>
<evidence type="ECO:0000305" key="4"/>
<organismHost>
    <name type="scientific">Homo sapiens</name>
    <name type="common">Human</name>
    <dbReference type="NCBI Taxonomy" id="9606"/>
</organismHost>
<organismHost>
    <name type="scientific">Simiiformes</name>
    <dbReference type="NCBI Taxonomy" id="314293"/>
</organismHost>
<reference key="1">
    <citation type="journal article" date="2001" name="Virology">
        <title>The genome sequence of Yaba-like disease virus, a yatapoxvirus.</title>
        <authorList>
            <person name="Lee H.-J."/>
            <person name="Essani K."/>
            <person name="Smith G.L."/>
        </authorList>
    </citation>
    <scope>NUCLEOTIDE SEQUENCE [LARGE SCALE GENOMIC DNA]</scope>
</reference>
<gene>
    <name type="ordered locus">110R</name>
</gene>
<organism>
    <name type="scientific">Yaba-like disease virus</name>
    <name type="common">YLDV</name>
    <dbReference type="NCBI Taxonomy" id="132475"/>
    <lineage>
        <taxon>Viruses</taxon>
        <taxon>Varidnaviria</taxon>
        <taxon>Bamfordvirae</taxon>
        <taxon>Nucleocytoviricota</taxon>
        <taxon>Pokkesviricetes</taxon>
        <taxon>Chitovirales</taxon>
        <taxon>Poxviridae</taxon>
        <taxon>Chordopoxvirinae</taxon>
        <taxon>Yatapoxvirus</taxon>
        <taxon>Tanapox virus</taxon>
    </lineage>
</organism>